<gene>
    <name evidence="2" type="primary">ddl</name>
    <name type="ordered locus">BURPS1710b_3542</name>
</gene>
<sequence length="312" mass="33341">MSGIDPKRFGKVAVLLGGDSAEREVSLNSGRLVLQGLRDAGIDAHPFDPAQRPLAALKDEGFVRAFNALHGGYGENGQIQGALDFYGIRYTGSGVLGSALGLDKFRTKLVWQQTGIPTPPFETVMRGDDYAARAQDIVAKLGVPLFVKPASEGSSVAVEKVKSADALPAALEEAAKHDKIVIVEKSIEGGGEYTACIAADLDLPLIRIVPAGEFYDYHAKYIANDTQYLIPCGLDAAKEAEFKRIARRAFDVLGCTDWGRADFMLDAAGNPYFLEVNTAPGMTDHSLPPKAARAVGIGYSELVVKVLSLTLD</sequence>
<accession>Q3JNE1</accession>
<dbReference type="EC" id="6.3.2.4" evidence="2"/>
<dbReference type="EMBL" id="CP000124">
    <property type="protein sequence ID" value="ABA49167.1"/>
    <property type="molecule type" value="Genomic_DNA"/>
</dbReference>
<dbReference type="RefSeq" id="WP_004194254.1">
    <property type="nucleotide sequence ID" value="NC_007434.1"/>
</dbReference>
<dbReference type="PDB" id="4EGQ">
    <property type="method" value="X-ray"/>
    <property type="resolution" value="2.20 A"/>
    <property type="chains" value="A/B/C/D=1-312"/>
</dbReference>
<dbReference type="PDBsum" id="4EGQ"/>
<dbReference type="SMR" id="Q3JNE1"/>
<dbReference type="EnsemblBacteria" id="ABA49167">
    <property type="protein sequence ID" value="ABA49167"/>
    <property type="gene ID" value="BURPS1710b_3542"/>
</dbReference>
<dbReference type="KEGG" id="bpm:BURPS1710b_3542"/>
<dbReference type="HOGENOM" id="CLU_039268_1_2_4"/>
<dbReference type="UniPathway" id="UPA00219"/>
<dbReference type="EvolutionaryTrace" id="Q3JNE1"/>
<dbReference type="Proteomes" id="UP000002700">
    <property type="component" value="Chromosome I"/>
</dbReference>
<dbReference type="GO" id="GO:0005829">
    <property type="term" value="C:cytosol"/>
    <property type="evidence" value="ECO:0007669"/>
    <property type="project" value="TreeGrafter"/>
</dbReference>
<dbReference type="GO" id="GO:0005524">
    <property type="term" value="F:ATP binding"/>
    <property type="evidence" value="ECO:0007669"/>
    <property type="project" value="UniProtKB-KW"/>
</dbReference>
<dbReference type="GO" id="GO:0008716">
    <property type="term" value="F:D-alanine-D-alanine ligase activity"/>
    <property type="evidence" value="ECO:0007669"/>
    <property type="project" value="UniProtKB-UniRule"/>
</dbReference>
<dbReference type="GO" id="GO:0046872">
    <property type="term" value="F:metal ion binding"/>
    <property type="evidence" value="ECO:0007669"/>
    <property type="project" value="UniProtKB-KW"/>
</dbReference>
<dbReference type="GO" id="GO:0071555">
    <property type="term" value="P:cell wall organization"/>
    <property type="evidence" value="ECO:0007669"/>
    <property type="project" value="UniProtKB-KW"/>
</dbReference>
<dbReference type="GO" id="GO:0009252">
    <property type="term" value="P:peptidoglycan biosynthetic process"/>
    <property type="evidence" value="ECO:0007669"/>
    <property type="project" value="UniProtKB-UniRule"/>
</dbReference>
<dbReference type="GO" id="GO:0008360">
    <property type="term" value="P:regulation of cell shape"/>
    <property type="evidence" value="ECO:0007669"/>
    <property type="project" value="UniProtKB-KW"/>
</dbReference>
<dbReference type="FunFam" id="3.30.1490.20:FF:000007">
    <property type="entry name" value="D-alanine--D-alanine ligase"/>
    <property type="match status" value="1"/>
</dbReference>
<dbReference type="FunFam" id="3.30.470.20:FF:000008">
    <property type="entry name" value="D-alanine--D-alanine ligase"/>
    <property type="match status" value="1"/>
</dbReference>
<dbReference type="FunFam" id="3.40.50.20:FF:000013">
    <property type="entry name" value="D-alanine--D-alanine ligase"/>
    <property type="match status" value="1"/>
</dbReference>
<dbReference type="Gene3D" id="3.40.50.20">
    <property type="match status" value="1"/>
</dbReference>
<dbReference type="Gene3D" id="3.30.1490.20">
    <property type="entry name" value="ATP-grasp fold, A domain"/>
    <property type="match status" value="1"/>
</dbReference>
<dbReference type="Gene3D" id="3.30.470.20">
    <property type="entry name" value="ATP-grasp fold, B domain"/>
    <property type="match status" value="1"/>
</dbReference>
<dbReference type="HAMAP" id="MF_00047">
    <property type="entry name" value="Dala_Dala_lig"/>
    <property type="match status" value="1"/>
</dbReference>
<dbReference type="InterPro" id="IPR011761">
    <property type="entry name" value="ATP-grasp"/>
</dbReference>
<dbReference type="InterPro" id="IPR013815">
    <property type="entry name" value="ATP_grasp_subdomain_1"/>
</dbReference>
<dbReference type="InterPro" id="IPR000291">
    <property type="entry name" value="D-Ala_lig_Van_CS"/>
</dbReference>
<dbReference type="InterPro" id="IPR005905">
    <property type="entry name" value="D_ala_D_ala"/>
</dbReference>
<dbReference type="InterPro" id="IPR011095">
    <property type="entry name" value="Dala_Dala_lig_C"/>
</dbReference>
<dbReference type="InterPro" id="IPR011127">
    <property type="entry name" value="Dala_Dala_lig_N"/>
</dbReference>
<dbReference type="InterPro" id="IPR016185">
    <property type="entry name" value="PreATP-grasp_dom_sf"/>
</dbReference>
<dbReference type="NCBIfam" id="TIGR01205">
    <property type="entry name" value="D_ala_D_alaTIGR"/>
    <property type="match status" value="1"/>
</dbReference>
<dbReference type="NCBIfam" id="NF002378">
    <property type="entry name" value="PRK01372.1"/>
    <property type="match status" value="1"/>
</dbReference>
<dbReference type="PANTHER" id="PTHR23132">
    <property type="entry name" value="D-ALANINE--D-ALANINE LIGASE"/>
    <property type="match status" value="1"/>
</dbReference>
<dbReference type="PANTHER" id="PTHR23132:SF23">
    <property type="entry name" value="D-ALANINE--D-ALANINE LIGASE B"/>
    <property type="match status" value="1"/>
</dbReference>
<dbReference type="Pfam" id="PF07478">
    <property type="entry name" value="Dala_Dala_lig_C"/>
    <property type="match status" value="1"/>
</dbReference>
<dbReference type="Pfam" id="PF01820">
    <property type="entry name" value="Dala_Dala_lig_N"/>
    <property type="match status" value="1"/>
</dbReference>
<dbReference type="PIRSF" id="PIRSF039102">
    <property type="entry name" value="Ddl/VanB"/>
    <property type="match status" value="1"/>
</dbReference>
<dbReference type="SUPFAM" id="SSF56059">
    <property type="entry name" value="Glutathione synthetase ATP-binding domain-like"/>
    <property type="match status" value="1"/>
</dbReference>
<dbReference type="SUPFAM" id="SSF52440">
    <property type="entry name" value="PreATP-grasp domain"/>
    <property type="match status" value="1"/>
</dbReference>
<dbReference type="PROSITE" id="PS50975">
    <property type="entry name" value="ATP_GRASP"/>
    <property type="match status" value="1"/>
</dbReference>
<dbReference type="PROSITE" id="PS00843">
    <property type="entry name" value="DALA_DALA_LIGASE_1"/>
    <property type="match status" value="1"/>
</dbReference>
<dbReference type="PROSITE" id="PS00844">
    <property type="entry name" value="DALA_DALA_LIGASE_2"/>
    <property type="match status" value="1"/>
</dbReference>
<reference key="1">
    <citation type="journal article" date="2010" name="Genome Biol. Evol.">
        <title>Continuing evolution of Burkholderia mallei through genome reduction and large-scale rearrangements.</title>
        <authorList>
            <person name="Losada L."/>
            <person name="Ronning C.M."/>
            <person name="DeShazer D."/>
            <person name="Woods D."/>
            <person name="Fedorova N."/>
            <person name="Kim H.S."/>
            <person name="Shabalina S.A."/>
            <person name="Pearson T.R."/>
            <person name="Brinkac L."/>
            <person name="Tan P."/>
            <person name="Nandi T."/>
            <person name="Crabtree J."/>
            <person name="Badger J."/>
            <person name="Beckstrom-Sternberg S."/>
            <person name="Saqib M."/>
            <person name="Schutzer S.E."/>
            <person name="Keim P."/>
            <person name="Nierman W.C."/>
        </authorList>
    </citation>
    <scope>NUCLEOTIDE SEQUENCE [LARGE SCALE GENOMIC DNA]</scope>
    <source>
        <strain>1710b</strain>
    </source>
</reference>
<feature type="chain" id="PRO_0000341076" description="D-alanine--D-alanine ligase">
    <location>
        <begin position="1"/>
        <end position="312"/>
    </location>
</feature>
<feature type="domain" description="ATP-grasp" evidence="2">
    <location>
        <begin position="108"/>
        <end position="308"/>
    </location>
</feature>
<feature type="binding site" evidence="2">
    <location>
        <begin position="138"/>
        <end position="193"/>
    </location>
    <ligand>
        <name>ATP</name>
        <dbReference type="ChEBI" id="CHEBI:30616"/>
    </ligand>
</feature>
<feature type="binding site" evidence="2">
    <location>
        <position position="262"/>
    </location>
    <ligand>
        <name>Mg(2+)</name>
        <dbReference type="ChEBI" id="CHEBI:18420"/>
        <label>1</label>
    </ligand>
</feature>
<feature type="binding site" evidence="2">
    <location>
        <position position="275"/>
    </location>
    <ligand>
        <name>Mg(2+)</name>
        <dbReference type="ChEBI" id="CHEBI:18420"/>
        <label>1</label>
    </ligand>
</feature>
<feature type="binding site" evidence="2">
    <location>
        <position position="275"/>
    </location>
    <ligand>
        <name>Mg(2+)</name>
        <dbReference type="ChEBI" id="CHEBI:18420"/>
        <label>2</label>
    </ligand>
</feature>
<feature type="binding site" evidence="2">
    <location>
        <position position="277"/>
    </location>
    <ligand>
        <name>Mg(2+)</name>
        <dbReference type="ChEBI" id="CHEBI:18420"/>
        <label>2</label>
    </ligand>
</feature>
<feature type="strand" evidence="3">
    <location>
        <begin position="11"/>
        <end position="15"/>
    </location>
</feature>
<feature type="helix" evidence="3">
    <location>
        <begin position="23"/>
        <end position="39"/>
    </location>
</feature>
<feature type="strand" evidence="3">
    <location>
        <begin position="43"/>
        <end position="47"/>
    </location>
</feature>
<feature type="turn" evidence="3">
    <location>
        <begin position="49"/>
        <end position="51"/>
    </location>
</feature>
<feature type="helix" evidence="3">
    <location>
        <begin position="56"/>
        <end position="59"/>
    </location>
</feature>
<feature type="strand" evidence="3">
    <location>
        <begin position="64"/>
        <end position="67"/>
    </location>
</feature>
<feature type="helix" evidence="3">
    <location>
        <begin position="72"/>
        <end position="74"/>
    </location>
</feature>
<feature type="helix" evidence="3">
    <location>
        <begin position="78"/>
        <end position="85"/>
    </location>
</feature>
<feature type="strand" evidence="3">
    <location>
        <begin position="89"/>
        <end position="92"/>
    </location>
</feature>
<feature type="helix" evidence="3">
    <location>
        <begin position="95"/>
        <end position="102"/>
    </location>
</feature>
<feature type="helix" evidence="3">
    <location>
        <begin position="104"/>
        <end position="114"/>
    </location>
</feature>
<feature type="strand" evidence="3">
    <location>
        <begin position="121"/>
        <end position="125"/>
    </location>
</feature>
<feature type="helix" evidence="3">
    <location>
        <begin position="130"/>
        <end position="141"/>
    </location>
</feature>
<feature type="strand" evidence="3">
    <location>
        <begin position="143"/>
        <end position="149"/>
    </location>
</feature>
<feature type="strand" evidence="3">
    <location>
        <begin position="159"/>
        <end position="161"/>
    </location>
</feature>
<feature type="helix" evidence="3">
    <location>
        <begin position="164"/>
        <end position="166"/>
    </location>
</feature>
<feature type="helix" evidence="3">
    <location>
        <begin position="167"/>
        <end position="177"/>
    </location>
</feature>
<feature type="strand" evidence="3">
    <location>
        <begin position="179"/>
        <end position="185"/>
    </location>
</feature>
<feature type="strand" evidence="3">
    <location>
        <begin position="192"/>
        <end position="198"/>
    </location>
</feature>
<feature type="strand" evidence="3">
    <location>
        <begin position="206"/>
        <end position="208"/>
    </location>
</feature>
<feature type="strand" evidence="3">
    <location>
        <begin position="229"/>
        <end position="231"/>
    </location>
</feature>
<feature type="helix" evidence="3">
    <location>
        <begin position="236"/>
        <end position="252"/>
    </location>
</feature>
<feature type="strand" evidence="3">
    <location>
        <begin position="257"/>
        <end position="265"/>
    </location>
</feature>
<feature type="strand" evidence="3">
    <location>
        <begin position="271"/>
        <end position="279"/>
    </location>
</feature>
<feature type="helix" evidence="3">
    <location>
        <begin position="287"/>
        <end position="294"/>
    </location>
</feature>
<feature type="helix" evidence="3">
    <location>
        <begin position="299"/>
        <end position="308"/>
    </location>
</feature>
<comment type="function">
    <text evidence="2">Cell wall formation.</text>
</comment>
<comment type="catalytic activity">
    <reaction evidence="2">
        <text>2 D-alanine + ATP = D-alanyl-D-alanine + ADP + phosphate + H(+)</text>
        <dbReference type="Rhea" id="RHEA:11224"/>
        <dbReference type="ChEBI" id="CHEBI:15378"/>
        <dbReference type="ChEBI" id="CHEBI:30616"/>
        <dbReference type="ChEBI" id="CHEBI:43474"/>
        <dbReference type="ChEBI" id="CHEBI:57416"/>
        <dbReference type="ChEBI" id="CHEBI:57822"/>
        <dbReference type="ChEBI" id="CHEBI:456216"/>
        <dbReference type="EC" id="6.3.2.4"/>
    </reaction>
</comment>
<comment type="cofactor">
    <cofactor evidence="1">
        <name>Mg(2+)</name>
        <dbReference type="ChEBI" id="CHEBI:18420"/>
    </cofactor>
    <cofactor evidence="1">
        <name>Mn(2+)</name>
        <dbReference type="ChEBI" id="CHEBI:29035"/>
    </cofactor>
    <text evidence="1">Binds 2 magnesium or manganese ions per subunit.</text>
</comment>
<comment type="pathway">
    <text evidence="2">Cell wall biogenesis; peptidoglycan biosynthesis.</text>
</comment>
<comment type="subcellular location">
    <subcellularLocation>
        <location evidence="2">Cytoplasm</location>
    </subcellularLocation>
</comment>
<comment type="similarity">
    <text evidence="2">Belongs to the D-alanine--D-alanine ligase family.</text>
</comment>
<keyword id="KW-0002">3D-structure</keyword>
<keyword id="KW-0067">ATP-binding</keyword>
<keyword id="KW-0133">Cell shape</keyword>
<keyword id="KW-0961">Cell wall biogenesis/degradation</keyword>
<keyword id="KW-0963">Cytoplasm</keyword>
<keyword id="KW-0436">Ligase</keyword>
<keyword id="KW-0460">Magnesium</keyword>
<keyword id="KW-0464">Manganese</keyword>
<keyword id="KW-0479">Metal-binding</keyword>
<keyword id="KW-0547">Nucleotide-binding</keyword>
<keyword id="KW-0573">Peptidoglycan synthesis</keyword>
<protein>
    <recommendedName>
        <fullName evidence="2">D-alanine--D-alanine ligase</fullName>
        <ecNumber evidence="2">6.3.2.4</ecNumber>
    </recommendedName>
    <alternativeName>
        <fullName evidence="2">D-Ala-D-Ala ligase</fullName>
    </alternativeName>
    <alternativeName>
        <fullName evidence="2">D-alanylalanine synthetase</fullName>
    </alternativeName>
</protein>
<name>DDL_BURP1</name>
<organism>
    <name type="scientific">Burkholderia pseudomallei (strain 1710b)</name>
    <dbReference type="NCBI Taxonomy" id="320372"/>
    <lineage>
        <taxon>Bacteria</taxon>
        <taxon>Pseudomonadati</taxon>
        <taxon>Pseudomonadota</taxon>
        <taxon>Betaproteobacteria</taxon>
        <taxon>Burkholderiales</taxon>
        <taxon>Burkholderiaceae</taxon>
        <taxon>Burkholderia</taxon>
        <taxon>pseudomallei group</taxon>
    </lineage>
</organism>
<evidence type="ECO:0000250" key="1"/>
<evidence type="ECO:0000255" key="2">
    <source>
        <dbReference type="HAMAP-Rule" id="MF_00047"/>
    </source>
</evidence>
<evidence type="ECO:0007829" key="3">
    <source>
        <dbReference type="PDB" id="4EGQ"/>
    </source>
</evidence>
<proteinExistence type="evidence at protein level"/>